<name>SURE_MARMS</name>
<dbReference type="EC" id="3.1.3.5" evidence="1"/>
<dbReference type="EMBL" id="CP000749">
    <property type="protein sequence ID" value="ABR70233.1"/>
    <property type="molecule type" value="Genomic_DNA"/>
</dbReference>
<dbReference type="SMR" id="A6VUV4"/>
<dbReference type="STRING" id="400668.Mmwyl1_1304"/>
<dbReference type="KEGG" id="mmw:Mmwyl1_1304"/>
<dbReference type="eggNOG" id="COG0496">
    <property type="taxonomic scope" value="Bacteria"/>
</dbReference>
<dbReference type="HOGENOM" id="CLU_045192_1_2_6"/>
<dbReference type="OrthoDB" id="9780815at2"/>
<dbReference type="GO" id="GO:0005737">
    <property type="term" value="C:cytoplasm"/>
    <property type="evidence" value="ECO:0007669"/>
    <property type="project" value="UniProtKB-SubCell"/>
</dbReference>
<dbReference type="GO" id="GO:0008254">
    <property type="term" value="F:3'-nucleotidase activity"/>
    <property type="evidence" value="ECO:0007669"/>
    <property type="project" value="TreeGrafter"/>
</dbReference>
<dbReference type="GO" id="GO:0008253">
    <property type="term" value="F:5'-nucleotidase activity"/>
    <property type="evidence" value="ECO:0007669"/>
    <property type="project" value="UniProtKB-UniRule"/>
</dbReference>
<dbReference type="GO" id="GO:0004309">
    <property type="term" value="F:exopolyphosphatase activity"/>
    <property type="evidence" value="ECO:0007669"/>
    <property type="project" value="TreeGrafter"/>
</dbReference>
<dbReference type="GO" id="GO:0046872">
    <property type="term" value="F:metal ion binding"/>
    <property type="evidence" value="ECO:0007669"/>
    <property type="project" value="UniProtKB-UniRule"/>
</dbReference>
<dbReference type="GO" id="GO:0000166">
    <property type="term" value="F:nucleotide binding"/>
    <property type="evidence" value="ECO:0007669"/>
    <property type="project" value="UniProtKB-KW"/>
</dbReference>
<dbReference type="FunFam" id="3.40.1210.10:FF:000001">
    <property type="entry name" value="5'/3'-nucleotidase SurE"/>
    <property type="match status" value="1"/>
</dbReference>
<dbReference type="Gene3D" id="3.40.1210.10">
    <property type="entry name" value="Survival protein SurE-like phosphatase/nucleotidase"/>
    <property type="match status" value="1"/>
</dbReference>
<dbReference type="HAMAP" id="MF_00060">
    <property type="entry name" value="SurE"/>
    <property type="match status" value="1"/>
</dbReference>
<dbReference type="InterPro" id="IPR030048">
    <property type="entry name" value="SurE"/>
</dbReference>
<dbReference type="InterPro" id="IPR002828">
    <property type="entry name" value="SurE-like_Pase/nucleotidase"/>
</dbReference>
<dbReference type="InterPro" id="IPR036523">
    <property type="entry name" value="SurE-like_sf"/>
</dbReference>
<dbReference type="NCBIfam" id="NF001489">
    <property type="entry name" value="PRK00346.1-3"/>
    <property type="match status" value="1"/>
</dbReference>
<dbReference type="NCBIfam" id="NF001490">
    <property type="entry name" value="PRK00346.1-4"/>
    <property type="match status" value="1"/>
</dbReference>
<dbReference type="NCBIfam" id="TIGR00087">
    <property type="entry name" value="surE"/>
    <property type="match status" value="1"/>
</dbReference>
<dbReference type="PANTHER" id="PTHR30457">
    <property type="entry name" value="5'-NUCLEOTIDASE SURE"/>
    <property type="match status" value="1"/>
</dbReference>
<dbReference type="PANTHER" id="PTHR30457:SF12">
    <property type="entry name" value="5'_3'-NUCLEOTIDASE SURE"/>
    <property type="match status" value="1"/>
</dbReference>
<dbReference type="Pfam" id="PF01975">
    <property type="entry name" value="SurE"/>
    <property type="match status" value="1"/>
</dbReference>
<dbReference type="SUPFAM" id="SSF64167">
    <property type="entry name" value="SurE-like"/>
    <property type="match status" value="1"/>
</dbReference>
<comment type="function">
    <text evidence="1">Nucleotidase that shows phosphatase activity on nucleoside 5'-monophosphates.</text>
</comment>
<comment type="catalytic activity">
    <reaction evidence="1">
        <text>a ribonucleoside 5'-phosphate + H2O = a ribonucleoside + phosphate</text>
        <dbReference type="Rhea" id="RHEA:12484"/>
        <dbReference type="ChEBI" id="CHEBI:15377"/>
        <dbReference type="ChEBI" id="CHEBI:18254"/>
        <dbReference type="ChEBI" id="CHEBI:43474"/>
        <dbReference type="ChEBI" id="CHEBI:58043"/>
        <dbReference type="EC" id="3.1.3.5"/>
    </reaction>
</comment>
<comment type="cofactor">
    <cofactor evidence="1">
        <name>a divalent metal cation</name>
        <dbReference type="ChEBI" id="CHEBI:60240"/>
    </cofactor>
    <text evidence="1">Binds 1 divalent metal cation per subunit.</text>
</comment>
<comment type="subcellular location">
    <subcellularLocation>
        <location evidence="1">Cytoplasm</location>
    </subcellularLocation>
</comment>
<comment type="similarity">
    <text evidence="1">Belongs to the SurE nucleotidase family.</text>
</comment>
<protein>
    <recommendedName>
        <fullName evidence="1">5'-nucleotidase SurE</fullName>
        <ecNumber evidence="1">3.1.3.5</ecNumber>
    </recommendedName>
    <alternativeName>
        <fullName evidence="1">Nucleoside 5'-monophosphate phosphohydrolase</fullName>
    </alternativeName>
</protein>
<organism>
    <name type="scientific">Marinomonas sp. (strain MWYL1)</name>
    <dbReference type="NCBI Taxonomy" id="400668"/>
    <lineage>
        <taxon>Bacteria</taxon>
        <taxon>Pseudomonadati</taxon>
        <taxon>Pseudomonadota</taxon>
        <taxon>Gammaproteobacteria</taxon>
        <taxon>Oceanospirillales</taxon>
        <taxon>Oceanospirillaceae</taxon>
        <taxon>Marinomonas</taxon>
    </lineage>
</organism>
<keyword id="KW-0963">Cytoplasm</keyword>
<keyword id="KW-0378">Hydrolase</keyword>
<keyword id="KW-0479">Metal-binding</keyword>
<keyword id="KW-0547">Nucleotide-binding</keyword>
<evidence type="ECO:0000255" key="1">
    <source>
        <dbReference type="HAMAP-Rule" id="MF_00060"/>
    </source>
</evidence>
<proteinExistence type="inferred from homology"/>
<reference key="1">
    <citation type="submission" date="2007-06" db="EMBL/GenBank/DDBJ databases">
        <title>Complete sequence of Marinomonas sp. MWYL1.</title>
        <authorList>
            <consortium name="US DOE Joint Genome Institute"/>
            <person name="Copeland A."/>
            <person name="Lucas S."/>
            <person name="Lapidus A."/>
            <person name="Barry K."/>
            <person name="Glavina del Rio T."/>
            <person name="Dalin E."/>
            <person name="Tice H."/>
            <person name="Pitluck S."/>
            <person name="Kiss H."/>
            <person name="Brettin T."/>
            <person name="Bruce D."/>
            <person name="Detter J.C."/>
            <person name="Han C."/>
            <person name="Schmutz J."/>
            <person name="Larimer F."/>
            <person name="Land M."/>
            <person name="Hauser L."/>
            <person name="Kyrpides N."/>
            <person name="Kim E."/>
            <person name="Johnston A.W.B."/>
            <person name="Todd J.D."/>
            <person name="Rogers R."/>
            <person name="Wexler M."/>
            <person name="Bond P.L."/>
            <person name="Li Y."/>
            <person name="Richardson P."/>
        </authorList>
    </citation>
    <scope>NUCLEOTIDE SEQUENCE [LARGE SCALE GENOMIC DNA]</scope>
    <source>
        <strain>MWYL1</strain>
    </source>
</reference>
<feature type="chain" id="PRO_1000075031" description="5'-nucleotidase SurE">
    <location>
        <begin position="1"/>
        <end position="248"/>
    </location>
</feature>
<feature type="binding site" evidence="1">
    <location>
        <position position="8"/>
    </location>
    <ligand>
        <name>a divalent metal cation</name>
        <dbReference type="ChEBI" id="CHEBI:60240"/>
    </ligand>
</feature>
<feature type="binding site" evidence="1">
    <location>
        <position position="9"/>
    </location>
    <ligand>
        <name>a divalent metal cation</name>
        <dbReference type="ChEBI" id="CHEBI:60240"/>
    </ligand>
</feature>
<feature type="binding site" evidence="1">
    <location>
        <position position="39"/>
    </location>
    <ligand>
        <name>a divalent metal cation</name>
        <dbReference type="ChEBI" id="CHEBI:60240"/>
    </ligand>
</feature>
<feature type="binding site" evidence="1">
    <location>
        <position position="91"/>
    </location>
    <ligand>
        <name>a divalent metal cation</name>
        <dbReference type="ChEBI" id="CHEBI:60240"/>
    </ligand>
</feature>
<sequence length="248" mass="26603">MRILIANDDGLDALGIQTLAKYLQREYAILVVAPDRNRSGASNSLTLSRPIQPVKVVEGQYRVDGTPTDCVNLALSGVIDGDVDLVVSGINHGANLGDDVIYSGTVAAAMEARHLGRPALAVSLVGNLHFDTAAKVIMQLLKDSHTLELPAGILLNINVPDVPYSELKGIQVTRLGYRHKAQAPISAQHPKGIPSFWIGALSEPHDVSEGTDFCAVSKGYVSITPIHTDMTCYEARSPLTKWTDTITL</sequence>
<gene>
    <name evidence="1" type="primary">surE</name>
    <name type="ordered locus">Mmwyl1_1304</name>
</gene>
<accession>A6VUV4</accession>